<keyword id="KW-0963">Cytoplasm</keyword>
<keyword id="KW-0489">Methyltransferase</keyword>
<keyword id="KW-1185">Reference proteome</keyword>
<keyword id="KW-0694">RNA-binding</keyword>
<keyword id="KW-0698">rRNA processing</keyword>
<keyword id="KW-0949">S-adenosyl-L-methionine</keyword>
<keyword id="KW-0808">Transferase</keyword>
<feature type="chain" id="PRO_0000101495" description="Ribosomal RNA small subunit methyltransferase A">
    <location>
        <begin position="1"/>
        <end position="265"/>
    </location>
</feature>
<feature type="binding site" evidence="1">
    <location>
        <position position="13"/>
    </location>
    <ligand>
        <name>S-adenosyl-L-methionine</name>
        <dbReference type="ChEBI" id="CHEBI:59789"/>
    </ligand>
</feature>
<feature type="binding site" evidence="1">
    <location>
        <position position="15"/>
    </location>
    <ligand>
        <name>S-adenosyl-L-methionine</name>
        <dbReference type="ChEBI" id="CHEBI:59789"/>
    </ligand>
</feature>
<feature type="binding site" evidence="1">
    <location>
        <position position="40"/>
    </location>
    <ligand>
        <name>S-adenosyl-L-methionine</name>
        <dbReference type="ChEBI" id="CHEBI:59789"/>
    </ligand>
</feature>
<feature type="binding site" evidence="1">
    <location>
        <position position="61"/>
    </location>
    <ligand>
        <name>S-adenosyl-L-methionine</name>
        <dbReference type="ChEBI" id="CHEBI:59789"/>
    </ligand>
</feature>
<feature type="binding site" evidence="1">
    <location>
        <position position="85"/>
    </location>
    <ligand>
        <name>S-adenosyl-L-methionine</name>
        <dbReference type="ChEBI" id="CHEBI:59789"/>
    </ligand>
</feature>
<feature type="binding site" evidence="1">
    <location>
        <position position="103"/>
    </location>
    <ligand>
        <name>S-adenosyl-L-methionine</name>
        <dbReference type="ChEBI" id="CHEBI:59789"/>
    </ligand>
</feature>
<gene>
    <name evidence="1" type="primary">rsmA</name>
    <name evidence="1" type="synonym">ksgA</name>
    <name type="ordered locus">BP3331</name>
</gene>
<sequence length="265" mass="29281">MSAHQARKRFGQHFLTDESVVESIVRAIGPARDDRVVEIGPGLSALTRPLLDRIDHLTAVEIDRDLAARLRRQYPAERLTVVEADALTVDFAQFGQGLRVVGNLPYNISSPLLFHLMGAAEQVRDQHFMLQREVIDRMVAEPGSGDYSRLSVMLQARYRMEKLFDVAPEAFDPPPRVVSAVVRMAPLPADRLRPASDAAFETVVARAFSQRRKMLRRVLDDWAALTPWDELGIAPTARAEEVGVAQFIGLADALLAAGAPGLARP</sequence>
<proteinExistence type="inferred from homology"/>
<reference key="1">
    <citation type="journal article" date="2003" name="Nat. Genet.">
        <title>Comparative analysis of the genome sequences of Bordetella pertussis, Bordetella parapertussis and Bordetella bronchiseptica.</title>
        <authorList>
            <person name="Parkhill J."/>
            <person name="Sebaihia M."/>
            <person name="Preston A."/>
            <person name="Murphy L.D."/>
            <person name="Thomson N.R."/>
            <person name="Harris D.E."/>
            <person name="Holden M.T.G."/>
            <person name="Churcher C.M."/>
            <person name="Bentley S.D."/>
            <person name="Mungall K.L."/>
            <person name="Cerdeno-Tarraga A.-M."/>
            <person name="Temple L."/>
            <person name="James K.D."/>
            <person name="Harris B."/>
            <person name="Quail M.A."/>
            <person name="Achtman M."/>
            <person name="Atkin R."/>
            <person name="Baker S."/>
            <person name="Basham D."/>
            <person name="Bason N."/>
            <person name="Cherevach I."/>
            <person name="Chillingworth T."/>
            <person name="Collins M."/>
            <person name="Cronin A."/>
            <person name="Davis P."/>
            <person name="Doggett J."/>
            <person name="Feltwell T."/>
            <person name="Goble A."/>
            <person name="Hamlin N."/>
            <person name="Hauser H."/>
            <person name="Holroyd S."/>
            <person name="Jagels K."/>
            <person name="Leather S."/>
            <person name="Moule S."/>
            <person name="Norberczak H."/>
            <person name="O'Neil S."/>
            <person name="Ormond D."/>
            <person name="Price C."/>
            <person name="Rabbinowitsch E."/>
            <person name="Rutter S."/>
            <person name="Sanders M."/>
            <person name="Saunders D."/>
            <person name="Seeger K."/>
            <person name="Sharp S."/>
            <person name="Simmonds M."/>
            <person name="Skelton J."/>
            <person name="Squares R."/>
            <person name="Squares S."/>
            <person name="Stevens K."/>
            <person name="Unwin L."/>
            <person name="Whitehead S."/>
            <person name="Barrell B.G."/>
            <person name="Maskell D.J."/>
        </authorList>
    </citation>
    <scope>NUCLEOTIDE SEQUENCE [LARGE SCALE GENOMIC DNA]</scope>
    <source>
        <strain>Tohama I / ATCC BAA-589 / NCTC 13251</strain>
    </source>
</reference>
<comment type="function">
    <text evidence="1">Specifically dimethylates two adjacent adenosines (A1518 and A1519) in the loop of a conserved hairpin near the 3'-end of 16S rRNA in the 30S particle. May play a critical role in biogenesis of 30S subunits.</text>
</comment>
<comment type="catalytic activity">
    <reaction evidence="1">
        <text>adenosine(1518)/adenosine(1519) in 16S rRNA + 4 S-adenosyl-L-methionine = N(6)-dimethyladenosine(1518)/N(6)-dimethyladenosine(1519) in 16S rRNA + 4 S-adenosyl-L-homocysteine + 4 H(+)</text>
        <dbReference type="Rhea" id="RHEA:19609"/>
        <dbReference type="Rhea" id="RHEA-COMP:10232"/>
        <dbReference type="Rhea" id="RHEA-COMP:10233"/>
        <dbReference type="ChEBI" id="CHEBI:15378"/>
        <dbReference type="ChEBI" id="CHEBI:57856"/>
        <dbReference type="ChEBI" id="CHEBI:59789"/>
        <dbReference type="ChEBI" id="CHEBI:74411"/>
        <dbReference type="ChEBI" id="CHEBI:74493"/>
        <dbReference type="EC" id="2.1.1.182"/>
    </reaction>
</comment>
<comment type="subcellular location">
    <subcellularLocation>
        <location evidence="1">Cytoplasm</location>
    </subcellularLocation>
</comment>
<comment type="similarity">
    <text evidence="1">Belongs to the class I-like SAM-binding methyltransferase superfamily. rRNA adenine N(6)-methyltransferase family. RsmA subfamily.</text>
</comment>
<dbReference type="EC" id="2.1.1.182" evidence="1"/>
<dbReference type="EMBL" id="BX640421">
    <property type="protein sequence ID" value="CAE43596.1"/>
    <property type="molecule type" value="Genomic_DNA"/>
</dbReference>
<dbReference type="RefSeq" id="NP_881867.1">
    <property type="nucleotide sequence ID" value="NC_002929.2"/>
</dbReference>
<dbReference type="RefSeq" id="WP_010931413.1">
    <property type="nucleotide sequence ID" value="NZ_CP039022.1"/>
</dbReference>
<dbReference type="SMR" id="Q7VU11"/>
<dbReference type="STRING" id="257313.BP3331"/>
<dbReference type="PaxDb" id="257313-BP3331"/>
<dbReference type="GeneID" id="69600666"/>
<dbReference type="KEGG" id="bpe:BP3331"/>
<dbReference type="PATRIC" id="fig|257313.5.peg.3610"/>
<dbReference type="eggNOG" id="COG0030">
    <property type="taxonomic scope" value="Bacteria"/>
</dbReference>
<dbReference type="HOGENOM" id="CLU_041220_0_1_4"/>
<dbReference type="Proteomes" id="UP000002676">
    <property type="component" value="Chromosome"/>
</dbReference>
<dbReference type="GO" id="GO:0005829">
    <property type="term" value="C:cytosol"/>
    <property type="evidence" value="ECO:0007669"/>
    <property type="project" value="TreeGrafter"/>
</dbReference>
<dbReference type="GO" id="GO:0052908">
    <property type="term" value="F:16S rRNA (adenine(1518)-N(6)/adenine(1519)-N(6))-dimethyltransferase activity"/>
    <property type="evidence" value="ECO:0007669"/>
    <property type="project" value="UniProtKB-EC"/>
</dbReference>
<dbReference type="GO" id="GO:0003723">
    <property type="term" value="F:RNA binding"/>
    <property type="evidence" value="ECO:0007669"/>
    <property type="project" value="UniProtKB-KW"/>
</dbReference>
<dbReference type="CDD" id="cd02440">
    <property type="entry name" value="AdoMet_MTases"/>
    <property type="match status" value="1"/>
</dbReference>
<dbReference type="FunFam" id="1.10.8.100:FF:000001">
    <property type="entry name" value="Ribosomal RNA small subunit methyltransferase A"/>
    <property type="match status" value="1"/>
</dbReference>
<dbReference type="Gene3D" id="1.10.8.100">
    <property type="entry name" value="Ribosomal RNA adenine dimethylase-like, domain 2"/>
    <property type="match status" value="1"/>
</dbReference>
<dbReference type="Gene3D" id="3.40.50.150">
    <property type="entry name" value="Vaccinia Virus protein VP39"/>
    <property type="match status" value="1"/>
</dbReference>
<dbReference type="HAMAP" id="MF_00607">
    <property type="entry name" value="16SrRNA_methyltr_A"/>
    <property type="match status" value="1"/>
</dbReference>
<dbReference type="InterPro" id="IPR001737">
    <property type="entry name" value="KsgA/Erm"/>
</dbReference>
<dbReference type="InterPro" id="IPR023165">
    <property type="entry name" value="rRNA_Ade_diMease-like_C"/>
</dbReference>
<dbReference type="InterPro" id="IPR020596">
    <property type="entry name" value="rRNA_Ade_Mease_Trfase_CS"/>
</dbReference>
<dbReference type="InterPro" id="IPR020598">
    <property type="entry name" value="rRNA_Ade_methylase_Trfase_N"/>
</dbReference>
<dbReference type="InterPro" id="IPR011530">
    <property type="entry name" value="rRNA_adenine_dimethylase"/>
</dbReference>
<dbReference type="InterPro" id="IPR029063">
    <property type="entry name" value="SAM-dependent_MTases_sf"/>
</dbReference>
<dbReference type="NCBIfam" id="TIGR00755">
    <property type="entry name" value="ksgA"/>
    <property type="match status" value="1"/>
</dbReference>
<dbReference type="PANTHER" id="PTHR11727">
    <property type="entry name" value="DIMETHYLADENOSINE TRANSFERASE"/>
    <property type="match status" value="1"/>
</dbReference>
<dbReference type="PANTHER" id="PTHR11727:SF7">
    <property type="entry name" value="DIMETHYLADENOSINE TRANSFERASE-RELATED"/>
    <property type="match status" value="1"/>
</dbReference>
<dbReference type="Pfam" id="PF00398">
    <property type="entry name" value="RrnaAD"/>
    <property type="match status" value="1"/>
</dbReference>
<dbReference type="SMART" id="SM00650">
    <property type="entry name" value="rADc"/>
    <property type="match status" value="1"/>
</dbReference>
<dbReference type="SUPFAM" id="SSF53335">
    <property type="entry name" value="S-adenosyl-L-methionine-dependent methyltransferases"/>
    <property type="match status" value="1"/>
</dbReference>
<dbReference type="PROSITE" id="PS01131">
    <property type="entry name" value="RRNA_A_DIMETH"/>
    <property type="match status" value="1"/>
</dbReference>
<dbReference type="PROSITE" id="PS51689">
    <property type="entry name" value="SAM_RNA_A_N6_MT"/>
    <property type="match status" value="1"/>
</dbReference>
<organism>
    <name type="scientific">Bordetella pertussis (strain Tohama I / ATCC BAA-589 / NCTC 13251)</name>
    <dbReference type="NCBI Taxonomy" id="257313"/>
    <lineage>
        <taxon>Bacteria</taxon>
        <taxon>Pseudomonadati</taxon>
        <taxon>Pseudomonadota</taxon>
        <taxon>Betaproteobacteria</taxon>
        <taxon>Burkholderiales</taxon>
        <taxon>Alcaligenaceae</taxon>
        <taxon>Bordetella</taxon>
    </lineage>
</organism>
<name>RSMA_BORPE</name>
<accession>Q7VU11</accession>
<protein>
    <recommendedName>
        <fullName evidence="1">Ribosomal RNA small subunit methyltransferase A</fullName>
        <ecNumber evidence="1">2.1.1.182</ecNumber>
    </recommendedName>
    <alternativeName>
        <fullName evidence="1">16S rRNA (adenine(1518)-N(6)/adenine(1519)-N(6))-dimethyltransferase</fullName>
    </alternativeName>
    <alternativeName>
        <fullName evidence="1">16S rRNA dimethyladenosine transferase</fullName>
    </alternativeName>
    <alternativeName>
        <fullName evidence="1">16S rRNA dimethylase</fullName>
    </alternativeName>
    <alternativeName>
        <fullName evidence="1">S-adenosylmethionine-6-N', N'-adenosyl(rRNA) dimethyltransferase</fullName>
    </alternativeName>
</protein>
<evidence type="ECO:0000255" key="1">
    <source>
        <dbReference type="HAMAP-Rule" id="MF_00607"/>
    </source>
</evidence>